<dbReference type="EC" id="3.4.19.-" evidence="7 10 11"/>
<dbReference type="EMBL" id="U73522">
    <property type="protein sequence ID" value="AAD05037.1"/>
    <property type="molecule type" value="mRNA"/>
</dbReference>
<dbReference type="EMBL" id="AC073046">
    <property type="protein sequence ID" value="AAX88908.1"/>
    <property type="molecule type" value="Genomic_DNA"/>
</dbReference>
<dbReference type="EMBL" id="CH471053">
    <property type="protein sequence ID" value="EAW99715.1"/>
    <property type="molecule type" value="Genomic_DNA"/>
</dbReference>
<dbReference type="EMBL" id="CH471053">
    <property type="protein sequence ID" value="EAW99716.1"/>
    <property type="molecule type" value="Genomic_DNA"/>
</dbReference>
<dbReference type="EMBL" id="BC007682">
    <property type="protein sequence ID" value="AAH07682.1"/>
    <property type="molecule type" value="mRNA"/>
</dbReference>
<dbReference type="EMBL" id="BC065574">
    <property type="protein sequence ID" value="AAH65574.1"/>
    <property type="molecule type" value="mRNA"/>
</dbReference>
<dbReference type="EMBL" id="BC101467">
    <property type="protein sequence ID" value="AAI01468.1"/>
    <property type="molecule type" value="mRNA"/>
</dbReference>
<dbReference type="EMBL" id="BC101469">
    <property type="protein sequence ID" value="AAI01470.1"/>
    <property type="molecule type" value="mRNA"/>
</dbReference>
<dbReference type="EMBL" id="EU927390">
    <property type="protein sequence ID" value="ACH57452.1"/>
    <property type="molecule type" value="mRNA"/>
</dbReference>
<dbReference type="CCDS" id="CCDS1929.1">
    <molecule id="O95630-1"/>
</dbReference>
<dbReference type="RefSeq" id="NP_001340896.1">
    <molecule id="O95630-1"/>
    <property type="nucleotide sequence ID" value="NM_001353967.2"/>
</dbReference>
<dbReference type="RefSeq" id="NP_001340897.1">
    <molecule id="O95630-1"/>
    <property type="nucleotide sequence ID" value="NM_001353968.2"/>
</dbReference>
<dbReference type="RefSeq" id="NP_006454.1">
    <molecule id="O95630-1"/>
    <property type="nucleotide sequence ID" value="NM_006463.6"/>
</dbReference>
<dbReference type="RefSeq" id="NP_964010.1">
    <molecule id="O95630-1"/>
    <property type="nucleotide sequence ID" value="NM_201647.4"/>
</dbReference>
<dbReference type="RefSeq" id="NP_998787.1">
    <molecule id="O95630-1"/>
    <property type="nucleotide sequence ID" value="NM_213622.4"/>
</dbReference>
<dbReference type="RefSeq" id="XP_005264145.1">
    <property type="nucleotide sequence ID" value="XM_005264088.3"/>
</dbReference>
<dbReference type="RefSeq" id="XP_011530785.1">
    <property type="nucleotide sequence ID" value="XM_011532483.2"/>
</dbReference>
<dbReference type="RefSeq" id="XP_016858664.1">
    <property type="nucleotide sequence ID" value="XM_017003175.1"/>
</dbReference>
<dbReference type="RefSeq" id="XP_047298917.1">
    <molecule id="O95630-1"/>
    <property type="nucleotide sequence ID" value="XM_047442961.1"/>
</dbReference>
<dbReference type="RefSeq" id="XP_047298918.1">
    <molecule id="O95630-1"/>
    <property type="nucleotide sequence ID" value="XM_047442962.1"/>
</dbReference>
<dbReference type="RefSeq" id="XP_047298919.1">
    <molecule id="O95630-1"/>
    <property type="nucleotide sequence ID" value="XM_047442963.1"/>
</dbReference>
<dbReference type="RefSeq" id="XP_047298920.1">
    <molecule id="O95630-1"/>
    <property type="nucleotide sequence ID" value="XM_047442964.1"/>
</dbReference>
<dbReference type="RefSeq" id="XP_047298924.1">
    <molecule id="O95630-1"/>
    <property type="nucleotide sequence ID" value="XM_047442968.1"/>
</dbReference>
<dbReference type="RefSeq" id="XP_047298926.1">
    <molecule id="O95630-1"/>
    <property type="nucleotide sequence ID" value="XM_047442970.1"/>
</dbReference>
<dbReference type="RefSeq" id="XP_047298927.1">
    <molecule id="O95630-1"/>
    <property type="nucleotide sequence ID" value="XM_047442971.1"/>
</dbReference>
<dbReference type="RefSeq" id="XP_054196176.1">
    <molecule id="O95630-1"/>
    <property type="nucleotide sequence ID" value="XM_054340201.1"/>
</dbReference>
<dbReference type="RefSeq" id="XP_054196177.1">
    <molecule id="O95630-1"/>
    <property type="nucleotide sequence ID" value="XM_054340202.1"/>
</dbReference>
<dbReference type="RefSeq" id="XP_054196178.1">
    <molecule id="O95630-1"/>
    <property type="nucleotide sequence ID" value="XM_054340203.1"/>
</dbReference>
<dbReference type="RefSeq" id="XP_054196179.1">
    <molecule id="O95630-1"/>
    <property type="nucleotide sequence ID" value="XM_054340204.1"/>
</dbReference>
<dbReference type="RefSeq" id="XP_054196180.1">
    <molecule id="O95630-1"/>
    <property type="nucleotide sequence ID" value="XM_054340205.1"/>
</dbReference>
<dbReference type="RefSeq" id="XP_054196181.1">
    <molecule id="O95630-1"/>
    <property type="nucleotide sequence ID" value="XM_054340206.1"/>
</dbReference>
<dbReference type="RefSeq" id="XP_054196182.1">
    <molecule id="O95630-1"/>
    <property type="nucleotide sequence ID" value="XM_054340207.1"/>
</dbReference>
<dbReference type="PDB" id="2XZE">
    <property type="method" value="X-ray"/>
    <property type="resolution" value="1.75 A"/>
    <property type="chains" value="A/B=1-146"/>
</dbReference>
<dbReference type="PDB" id="3RZU">
    <property type="method" value="X-ray"/>
    <property type="resolution" value="2.50 A"/>
    <property type="chains" value="A/B/C/D/E/F/G=243-424"/>
</dbReference>
<dbReference type="PDB" id="3RZV">
    <property type="method" value="X-ray"/>
    <property type="resolution" value="1.67 A"/>
    <property type="chains" value="A=219-424"/>
</dbReference>
<dbReference type="PDB" id="5IXF">
    <property type="method" value="NMR"/>
    <property type="chains" value="B=228-241"/>
</dbReference>
<dbReference type="PDBsum" id="2XZE"/>
<dbReference type="PDBsum" id="3RZU"/>
<dbReference type="PDBsum" id="3RZV"/>
<dbReference type="PDBsum" id="5IXF"/>
<dbReference type="SMR" id="O95630"/>
<dbReference type="BioGRID" id="115863">
    <property type="interactions" value="110"/>
</dbReference>
<dbReference type="CORUM" id="O95630"/>
<dbReference type="DIP" id="DIP-33062N"/>
<dbReference type="FunCoup" id="O95630">
    <property type="interactions" value="3853"/>
</dbReference>
<dbReference type="IntAct" id="O95630">
    <property type="interactions" value="69"/>
</dbReference>
<dbReference type="MINT" id="O95630"/>
<dbReference type="STRING" id="9606.ENSP00000377633"/>
<dbReference type="BindingDB" id="O95630"/>
<dbReference type="ChEMBL" id="CHEMBL4105848"/>
<dbReference type="MEROPS" id="M67.006"/>
<dbReference type="GlyGen" id="O95630">
    <property type="glycosylation" value="1 site, 1 O-linked glycan (1 site)"/>
</dbReference>
<dbReference type="iPTMnet" id="O95630"/>
<dbReference type="MetOSite" id="O95630"/>
<dbReference type="PhosphoSitePlus" id="O95630"/>
<dbReference type="BioMuta" id="STAMBP"/>
<dbReference type="REPRODUCTION-2DPAGE" id="IPI00007943"/>
<dbReference type="jPOST" id="O95630"/>
<dbReference type="MassIVE" id="O95630"/>
<dbReference type="PaxDb" id="9606-ENSP00000377633"/>
<dbReference type="PeptideAtlas" id="O95630"/>
<dbReference type="ProteomicsDB" id="50966">
    <molecule id="O95630-1"/>
</dbReference>
<dbReference type="Pumba" id="O95630"/>
<dbReference type="Antibodypedia" id="31376">
    <property type="antibodies" value="303 antibodies from 36 providers"/>
</dbReference>
<dbReference type="DNASU" id="10617"/>
<dbReference type="Ensembl" id="ENST00000339566.7">
    <molecule id="O95630-1"/>
    <property type="protein sequence ID" value="ENSP00000344742.3"/>
    <property type="gene ID" value="ENSG00000124356.17"/>
</dbReference>
<dbReference type="Ensembl" id="ENST00000394070.7">
    <molecule id="O95630-1"/>
    <property type="protein sequence ID" value="ENSP00000377633.2"/>
    <property type="gene ID" value="ENSG00000124356.17"/>
</dbReference>
<dbReference type="Ensembl" id="ENST00000394073.6">
    <molecule id="O95630-1"/>
    <property type="protein sequence ID" value="ENSP00000377636.1"/>
    <property type="gene ID" value="ENSG00000124356.17"/>
</dbReference>
<dbReference type="Ensembl" id="ENST00000409707.6">
    <molecule id="O95630-1"/>
    <property type="protein sequence ID" value="ENSP00000386548.1"/>
    <property type="gene ID" value="ENSG00000124356.17"/>
</dbReference>
<dbReference type="Ensembl" id="ENST00000432295.7">
    <molecule id="O95630-2"/>
    <property type="protein sequence ID" value="ENSP00000413874.3"/>
    <property type="gene ID" value="ENSG00000124356.17"/>
</dbReference>
<dbReference type="Ensembl" id="ENST00000682351.1">
    <molecule id="O95630-1"/>
    <property type="protein sequence ID" value="ENSP00000506833.1"/>
    <property type="gene ID" value="ENSG00000124356.17"/>
</dbReference>
<dbReference type="Ensembl" id="ENST00000682379.1">
    <molecule id="O95630-1"/>
    <property type="protein sequence ID" value="ENSP00000507081.1"/>
    <property type="gene ID" value="ENSG00000124356.17"/>
</dbReference>
<dbReference type="Ensembl" id="ENST00000682558.1">
    <molecule id="O95630-1"/>
    <property type="protein sequence ID" value="ENSP00000507014.1"/>
    <property type="gene ID" value="ENSG00000124356.17"/>
</dbReference>
<dbReference type="Ensembl" id="ENST00000682847.1">
    <molecule id="O95630-1"/>
    <property type="protein sequence ID" value="ENSP00000507864.1"/>
    <property type="gene ID" value="ENSG00000124356.17"/>
</dbReference>
<dbReference type="Ensembl" id="ENST00000683036.1">
    <molecule id="O95630-1"/>
    <property type="protein sequence ID" value="ENSP00000507639.1"/>
    <property type="gene ID" value="ENSG00000124356.17"/>
</dbReference>
<dbReference type="Ensembl" id="ENST00000683317.1">
    <molecule id="O95630-1"/>
    <property type="protein sequence ID" value="ENSP00000507092.1"/>
    <property type="gene ID" value="ENSG00000124356.17"/>
</dbReference>
<dbReference type="Ensembl" id="ENST00000683518.1">
    <molecule id="O95630-1"/>
    <property type="protein sequence ID" value="ENSP00000506865.1"/>
    <property type="gene ID" value="ENSG00000124356.17"/>
</dbReference>
<dbReference type="Ensembl" id="ENST00000683818.1">
    <molecule id="O95630-1"/>
    <property type="protein sequence ID" value="ENSP00000507658.1"/>
    <property type="gene ID" value="ENSG00000124356.17"/>
</dbReference>
<dbReference type="Ensembl" id="ENST00000684095.1">
    <molecule id="O95630-1"/>
    <property type="protein sequence ID" value="ENSP00000506845.1"/>
    <property type="gene ID" value="ENSG00000124356.17"/>
</dbReference>
<dbReference type="Ensembl" id="ENST00000684312.1">
    <molecule id="O95630-1"/>
    <property type="protein sequence ID" value="ENSP00000506958.1"/>
    <property type="gene ID" value="ENSG00000124356.17"/>
</dbReference>
<dbReference type="Ensembl" id="ENST00000684585.1">
    <molecule id="O95630-1"/>
    <property type="protein sequence ID" value="ENSP00000507054.1"/>
    <property type="gene ID" value="ENSG00000124356.17"/>
</dbReference>
<dbReference type="GeneID" id="10617"/>
<dbReference type="KEGG" id="hsa:10617"/>
<dbReference type="MANE-Select" id="ENST00000394070.7">
    <property type="protein sequence ID" value="ENSP00000377633.2"/>
    <property type="RefSeq nucleotide sequence ID" value="NM_213622.4"/>
    <property type="RefSeq protein sequence ID" value="NP_998787.1"/>
</dbReference>
<dbReference type="UCSC" id="uc002sjs.3">
    <molecule id="O95630-1"/>
    <property type="organism name" value="human"/>
</dbReference>
<dbReference type="AGR" id="HGNC:16950"/>
<dbReference type="CTD" id="10617"/>
<dbReference type="DisGeNET" id="10617"/>
<dbReference type="GeneCards" id="STAMBP"/>
<dbReference type="GeneReviews" id="STAMBP"/>
<dbReference type="HGNC" id="HGNC:16950">
    <property type="gene designation" value="STAMBP"/>
</dbReference>
<dbReference type="HPA" id="ENSG00000124356">
    <property type="expression patterns" value="Low tissue specificity"/>
</dbReference>
<dbReference type="MalaCards" id="STAMBP"/>
<dbReference type="MIM" id="606247">
    <property type="type" value="gene"/>
</dbReference>
<dbReference type="MIM" id="614261">
    <property type="type" value="phenotype"/>
</dbReference>
<dbReference type="neXtProt" id="NX_O95630"/>
<dbReference type="OpenTargets" id="ENSG00000124356"/>
<dbReference type="Orphanet" id="294016">
    <property type="disease" value="Microcephaly-capillary malformation syndrome"/>
</dbReference>
<dbReference type="PharmGKB" id="PA134955569"/>
<dbReference type="VEuPathDB" id="HostDB:ENSG00000124356"/>
<dbReference type="eggNOG" id="KOG2880">
    <property type="taxonomic scope" value="Eukaryota"/>
</dbReference>
<dbReference type="GeneTree" id="ENSGT00940000153710"/>
<dbReference type="HOGENOM" id="CLU_023304_0_1_1"/>
<dbReference type="InParanoid" id="O95630"/>
<dbReference type="OMA" id="NSFTITH"/>
<dbReference type="OrthoDB" id="3640at2759"/>
<dbReference type="PAN-GO" id="O95630">
    <property type="GO annotations" value="4 GO annotations based on evolutionary models"/>
</dbReference>
<dbReference type="PhylomeDB" id="O95630"/>
<dbReference type="TreeFam" id="TF323215"/>
<dbReference type="PathwayCommons" id="O95630"/>
<dbReference type="Reactome" id="R-HSA-5689901">
    <property type="pathway name" value="Metalloprotease DUBs"/>
</dbReference>
<dbReference type="SignaLink" id="O95630"/>
<dbReference type="SIGNOR" id="O95630"/>
<dbReference type="BioGRID-ORCS" id="10617">
    <property type="hits" value="138 hits in 1206 CRISPR screens"/>
</dbReference>
<dbReference type="ChiTaRS" id="STAMBP">
    <property type="organism name" value="human"/>
</dbReference>
<dbReference type="EvolutionaryTrace" id="O95630"/>
<dbReference type="GeneWiki" id="STAMBP"/>
<dbReference type="GenomeRNAi" id="10617"/>
<dbReference type="Pharos" id="O95630">
    <property type="development level" value="Tchem"/>
</dbReference>
<dbReference type="PRO" id="PR:O95630"/>
<dbReference type="Proteomes" id="UP000005640">
    <property type="component" value="Chromosome 2"/>
</dbReference>
<dbReference type="RNAct" id="O95630">
    <property type="molecule type" value="protein"/>
</dbReference>
<dbReference type="Bgee" id="ENSG00000124356">
    <property type="expression patterns" value="Expressed in C1 segment of cervical spinal cord and 216 other cell types or tissues"/>
</dbReference>
<dbReference type="ExpressionAtlas" id="O95630">
    <property type="expression patterns" value="baseline and differential"/>
</dbReference>
<dbReference type="GO" id="GO:0032154">
    <property type="term" value="C:cleavage furrow"/>
    <property type="evidence" value="ECO:0000314"/>
    <property type="project" value="MGI"/>
</dbReference>
<dbReference type="GO" id="GO:0005829">
    <property type="term" value="C:cytosol"/>
    <property type="evidence" value="ECO:0000314"/>
    <property type="project" value="HPA"/>
</dbReference>
<dbReference type="GO" id="GO:0005769">
    <property type="term" value="C:early endosome"/>
    <property type="evidence" value="ECO:0007669"/>
    <property type="project" value="UniProtKB-SubCell"/>
</dbReference>
<dbReference type="GO" id="GO:0005768">
    <property type="term" value="C:endosome"/>
    <property type="evidence" value="ECO:0000318"/>
    <property type="project" value="GO_Central"/>
</dbReference>
<dbReference type="GO" id="GO:0070062">
    <property type="term" value="C:extracellular exosome"/>
    <property type="evidence" value="ECO:0007005"/>
    <property type="project" value="UniProtKB"/>
</dbReference>
<dbReference type="GO" id="GO:0005654">
    <property type="term" value="C:nucleoplasm"/>
    <property type="evidence" value="ECO:0000314"/>
    <property type="project" value="HPA"/>
</dbReference>
<dbReference type="GO" id="GO:0005634">
    <property type="term" value="C:nucleus"/>
    <property type="evidence" value="ECO:0000304"/>
    <property type="project" value="ProtInc"/>
</dbReference>
<dbReference type="GO" id="GO:0005886">
    <property type="term" value="C:plasma membrane"/>
    <property type="evidence" value="ECO:0000314"/>
    <property type="project" value="HPA"/>
</dbReference>
<dbReference type="GO" id="GO:0101005">
    <property type="term" value="F:deubiquitinase activity"/>
    <property type="evidence" value="ECO:0000314"/>
    <property type="project" value="MGI"/>
</dbReference>
<dbReference type="GO" id="GO:0061578">
    <property type="term" value="F:K63-linked deubiquitinase activity"/>
    <property type="evidence" value="ECO:0000314"/>
    <property type="project" value="UniProtKB"/>
</dbReference>
<dbReference type="GO" id="GO:0046872">
    <property type="term" value="F:metal ion binding"/>
    <property type="evidence" value="ECO:0007669"/>
    <property type="project" value="UniProtKB-KW"/>
</dbReference>
<dbReference type="GO" id="GO:0140492">
    <property type="term" value="F:metal-dependent deubiquitinase activity"/>
    <property type="evidence" value="ECO:0007669"/>
    <property type="project" value="InterPro"/>
</dbReference>
<dbReference type="GO" id="GO:0019904">
    <property type="term" value="F:protein domain specific binding"/>
    <property type="evidence" value="ECO:0000353"/>
    <property type="project" value="UniProtKB"/>
</dbReference>
<dbReference type="GO" id="GO:0007259">
    <property type="term" value="P:cell surface receptor signaling pathway via JAK-STAT"/>
    <property type="evidence" value="ECO:0000304"/>
    <property type="project" value="ProtInc"/>
</dbReference>
<dbReference type="GO" id="GO:0110088">
    <property type="term" value="P:hippocampal neuron apoptotic process"/>
    <property type="evidence" value="ECO:0007669"/>
    <property type="project" value="Ensembl"/>
</dbReference>
<dbReference type="GO" id="GO:0000281">
    <property type="term" value="P:mitotic cytokinesis"/>
    <property type="evidence" value="ECO:0000315"/>
    <property type="project" value="MGI"/>
</dbReference>
<dbReference type="GO" id="GO:0110091">
    <property type="term" value="P:negative regulation of hippocampal neuron apoptotic process"/>
    <property type="evidence" value="ECO:0007669"/>
    <property type="project" value="Ensembl"/>
</dbReference>
<dbReference type="GO" id="GO:0051898">
    <property type="term" value="P:negative regulation of phosphatidylinositol 3-kinase/protein kinase B signal transduction"/>
    <property type="evidence" value="ECO:0000315"/>
    <property type="project" value="UniProtKB"/>
</dbReference>
<dbReference type="GO" id="GO:0046580">
    <property type="term" value="P:negative regulation of Ras protein signal transduction"/>
    <property type="evidence" value="ECO:0000315"/>
    <property type="project" value="UniProtKB"/>
</dbReference>
<dbReference type="GO" id="GO:0008284">
    <property type="term" value="P:positive regulation of cell population proliferation"/>
    <property type="evidence" value="ECO:0000304"/>
    <property type="project" value="ProtInc"/>
</dbReference>
<dbReference type="GO" id="GO:0016579">
    <property type="term" value="P:protein deubiquitination"/>
    <property type="evidence" value="ECO:0000315"/>
    <property type="project" value="MGI"/>
</dbReference>
<dbReference type="GO" id="GO:0070536">
    <property type="term" value="P:protein K63-linked deubiquitination"/>
    <property type="evidence" value="ECO:0007669"/>
    <property type="project" value="InterPro"/>
</dbReference>
<dbReference type="GO" id="GO:0006508">
    <property type="term" value="P:proteolysis"/>
    <property type="evidence" value="ECO:0007669"/>
    <property type="project" value="UniProtKB-KW"/>
</dbReference>
<dbReference type="CDD" id="cd08066">
    <property type="entry name" value="MPN_AMSH_like"/>
    <property type="match status" value="1"/>
</dbReference>
<dbReference type="DisProt" id="DP01872"/>
<dbReference type="FunFam" id="3.40.140.10:FF:000010">
    <property type="entry name" value="AMSH-like protease isoform X1"/>
    <property type="match status" value="1"/>
</dbReference>
<dbReference type="FunFam" id="1.20.58.80:FF:000013">
    <property type="entry name" value="STAM-binding protein-like A"/>
    <property type="match status" value="1"/>
</dbReference>
<dbReference type="Gene3D" id="3.40.140.10">
    <property type="entry name" value="Cytidine Deaminase, domain 2"/>
    <property type="match status" value="1"/>
</dbReference>
<dbReference type="Gene3D" id="1.20.58.80">
    <property type="entry name" value="Phosphotransferase system, lactose/cellobiose-type IIA subunit"/>
    <property type="match status" value="1"/>
</dbReference>
<dbReference type="IDEAL" id="IID00261"/>
<dbReference type="InterPro" id="IPR000555">
    <property type="entry name" value="JAMM/MPN+_dom"/>
</dbReference>
<dbReference type="InterPro" id="IPR037518">
    <property type="entry name" value="MPN"/>
</dbReference>
<dbReference type="InterPro" id="IPR044098">
    <property type="entry name" value="STAMBP/STALP-like_MPN"/>
</dbReference>
<dbReference type="InterPro" id="IPR015063">
    <property type="entry name" value="USP8_dimer"/>
</dbReference>
<dbReference type="PANTHER" id="PTHR12947">
    <property type="entry name" value="AMSH-LIKE PROTEASE"/>
    <property type="match status" value="1"/>
</dbReference>
<dbReference type="PANTHER" id="PTHR12947:SF8">
    <property type="entry name" value="STAM-BINDING PROTEIN"/>
    <property type="match status" value="1"/>
</dbReference>
<dbReference type="Pfam" id="PF01398">
    <property type="entry name" value="JAB"/>
    <property type="match status" value="1"/>
</dbReference>
<dbReference type="Pfam" id="PF08969">
    <property type="entry name" value="USP8_dimer"/>
    <property type="match status" value="1"/>
</dbReference>
<dbReference type="SMART" id="SM00232">
    <property type="entry name" value="JAB_MPN"/>
    <property type="match status" value="1"/>
</dbReference>
<dbReference type="SUPFAM" id="SSF102712">
    <property type="entry name" value="JAB1/MPN domain"/>
    <property type="match status" value="1"/>
</dbReference>
<dbReference type="SUPFAM" id="SSF140856">
    <property type="entry name" value="USP8 N-terminal domain-like"/>
    <property type="match status" value="1"/>
</dbReference>
<dbReference type="PROSITE" id="PS50249">
    <property type="entry name" value="MPN"/>
    <property type="match status" value="1"/>
</dbReference>
<feature type="chain" id="PRO_0000194869" description="STAM-binding protein">
    <location>
        <begin position="1"/>
        <end position="424"/>
    </location>
</feature>
<feature type="domain" description="MPN" evidence="3">
    <location>
        <begin position="257"/>
        <end position="388"/>
    </location>
</feature>
<feature type="region of interest" description="Interaction with CHMP3" evidence="8">
    <location>
        <begin position="1"/>
        <end position="127"/>
    </location>
</feature>
<feature type="region of interest" description="Interaction with STAM" evidence="4">
    <location>
        <begin position="227"/>
        <end position="231"/>
    </location>
</feature>
<feature type="short sequence motif" description="JAMM motif" evidence="3">
    <location>
        <begin position="335"/>
        <end position="348"/>
    </location>
</feature>
<feature type="binding site" evidence="3">
    <location>
        <position position="335"/>
    </location>
    <ligand>
        <name>Zn(2+)</name>
        <dbReference type="ChEBI" id="CHEBI:29105"/>
        <label>1</label>
        <note>catalytic</note>
    </ligand>
</feature>
<feature type="binding site" evidence="3">
    <location>
        <position position="337"/>
    </location>
    <ligand>
        <name>Zn(2+)</name>
        <dbReference type="ChEBI" id="CHEBI:29105"/>
        <label>1</label>
        <note>catalytic</note>
    </ligand>
</feature>
<feature type="binding site" evidence="3">
    <location>
        <position position="348"/>
    </location>
    <ligand>
        <name>Zn(2+)</name>
        <dbReference type="ChEBI" id="CHEBI:29105"/>
        <label>1</label>
        <note>catalytic</note>
    </ligand>
</feature>
<feature type="binding site" evidence="2">
    <location>
        <position position="350"/>
    </location>
    <ligand>
        <name>Zn(2+)</name>
        <dbReference type="ChEBI" id="CHEBI:29105"/>
        <label>2</label>
    </ligand>
</feature>
<feature type="binding site" evidence="2">
    <location>
        <position position="390"/>
    </location>
    <ligand>
        <name>Zn(2+)</name>
        <dbReference type="ChEBI" id="CHEBI:29105"/>
        <label>2</label>
    </ligand>
</feature>
<feature type="binding site" evidence="2">
    <location>
        <position position="396"/>
    </location>
    <ligand>
        <name>Zn(2+)</name>
        <dbReference type="ChEBI" id="CHEBI:29105"/>
        <label>2</label>
    </ligand>
</feature>
<feature type="binding site" evidence="2">
    <location>
        <position position="398"/>
    </location>
    <ligand>
        <name>Zn(2+)</name>
        <dbReference type="ChEBI" id="CHEBI:29105"/>
        <label>2</label>
    </ligand>
</feature>
<feature type="site" description="Indirect zinc-binding" evidence="2">
    <location>
        <position position="280"/>
    </location>
</feature>
<feature type="modified residue" description="Phosphoserine" evidence="5 17">
    <location>
        <position position="2"/>
    </location>
</feature>
<feature type="modified residue" description="Phosphoserine" evidence="5">
    <location>
        <position position="48"/>
    </location>
</feature>
<feature type="modified residue" description="Phosphoserine" evidence="5 17">
    <location>
        <position position="243"/>
    </location>
</feature>
<feature type="modified residue" description="Phosphoserine" evidence="5">
    <location>
        <position position="245"/>
    </location>
</feature>
<feature type="modified residue" description="Phosphoserine" evidence="5 17">
    <location>
        <position position="247"/>
    </location>
</feature>
<feature type="splice variant" id="VSP_057197" description="In isoform 2." evidence="14">
    <original>THPTQTAFLSSVDLHTHCSYQMMLPESVAIVCSPKFQETGFFKLTDHGLEEISSCRQKGFHPHSKDPPLFCSCSHVTVVDRAVTITDLR</original>
    <variation>VETLWSLKSLHAP</variation>
    <location>
        <begin position="336"/>
        <end position="424"/>
    </location>
</feature>
<feature type="sequence variant" id="VAR_069806" description="In MICCAP." evidence="10">
    <original>R</original>
    <variation>P</variation>
    <location>
        <position position="14"/>
    </location>
</feature>
<feature type="sequence variant" id="VAR_069807" description="In MICCAP; dbSNP:rs143739249." evidence="10">
    <original>R</original>
    <variation>C</variation>
    <location>
        <position position="38"/>
    </location>
</feature>
<feature type="sequence variant" id="VAR_069808" description="In MICCAP; dbSNP:rs397509387." evidence="10">
    <original>E</original>
    <variation>G</variation>
    <location>
        <position position="42"/>
    </location>
</feature>
<feature type="sequence variant" id="VAR_069809" description="In MICCAP; dbSNP:rs781694797." evidence="10">
    <original>Y</original>
    <variation>C</variation>
    <location>
        <position position="63"/>
    </location>
</feature>
<feature type="sequence variant" id="VAR_069810" description="In MICCAP; dbSNP:rs397514697." evidence="10">
    <original>F</original>
    <variation>Y</variation>
    <location>
        <position position="100"/>
    </location>
</feature>
<feature type="sequence variant" id="VAR_069811" description="In MICCAP; dbSNP:rs202100019." evidence="10">
    <original>T</original>
    <variation>I</variation>
    <location>
        <position position="313"/>
    </location>
</feature>
<feature type="mutagenesis site" description="Promotes accumulation of ubiquitin on endosomes, ablates enzymatic activity toward polyubiquitin substrate and allows ubiquitinated STAM stabilization." evidence="7">
    <original>D</original>
    <variation>A</variation>
    <location>
        <position position="348"/>
    </location>
</feature>
<feature type="helix" evidence="18">
    <location>
        <begin position="11"/>
        <end position="22"/>
    </location>
</feature>
<feature type="helix" evidence="18">
    <location>
        <begin position="33"/>
        <end position="53"/>
    </location>
</feature>
<feature type="helix" evidence="18">
    <location>
        <begin position="56"/>
        <end position="71"/>
    </location>
</feature>
<feature type="helix" evidence="18">
    <location>
        <begin position="74"/>
        <end position="76"/>
    </location>
</feature>
<feature type="turn" evidence="18">
    <location>
        <begin position="78"/>
        <end position="82"/>
    </location>
</feature>
<feature type="helix" evidence="18">
    <location>
        <begin position="88"/>
        <end position="97"/>
    </location>
</feature>
<feature type="helix" evidence="18">
    <location>
        <begin position="99"/>
        <end position="137"/>
    </location>
</feature>
<feature type="strand" evidence="20">
    <location>
        <begin position="257"/>
        <end position="260"/>
    </location>
</feature>
<feature type="helix" evidence="20">
    <location>
        <begin position="263"/>
        <end position="276"/>
    </location>
</feature>
<feature type="strand" evidence="20">
    <location>
        <begin position="282"/>
        <end position="290"/>
    </location>
</feature>
<feature type="strand" evidence="20">
    <location>
        <begin position="293"/>
        <end position="301"/>
    </location>
</feature>
<feature type="strand" evidence="20">
    <location>
        <begin position="304"/>
        <end position="306"/>
    </location>
</feature>
<feature type="strand" evidence="20">
    <location>
        <begin position="311"/>
        <end position="313"/>
    </location>
</feature>
<feature type="helix" evidence="20">
    <location>
        <begin position="316"/>
        <end position="326"/>
    </location>
</feature>
<feature type="strand" evidence="20">
    <location>
        <begin position="329"/>
        <end position="336"/>
    </location>
</feature>
<feature type="strand" evidence="19">
    <location>
        <begin position="338"/>
        <end position="340"/>
    </location>
</feature>
<feature type="helix" evidence="20">
    <location>
        <begin position="346"/>
        <end position="358"/>
    </location>
</feature>
<feature type="strand" evidence="20">
    <location>
        <begin position="363"/>
        <end position="368"/>
    </location>
</feature>
<feature type="turn" evidence="20">
    <location>
        <begin position="369"/>
        <end position="372"/>
    </location>
</feature>
<feature type="strand" evidence="20">
    <location>
        <begin position="373"/>
        <end position="379"/>
    </location>
</feature>
<feature type="helix" evidence="20">
    <location>
        <begin position="381"/>
        <end position="389"/>
    </location>
</feature>
<feature type="strand" evidence="20">
    <location>
        <begin position="404"/>
        <end position="407"/>
    </location>
</feature>
<feature type="strand" evidence="20">
    <location>
        <begin position="409"/>
        <end position="414"/>
    </location>
</feature>
<feature type="strand" evidence="20">
    <location>
        <begin position="419"/>
        <end position="422"/>
    </location>
</feature>
<gene>
    <name type="primary">STAMBP</name>
    <name evidence="12" type="synonym">AMSH</name>
</gene>
<sequence>MSDHGDVSLPPEDRVRALSQLGSAVEVNEDIPPRRYFRSGVEIIRMASIYSEEGNIEHAFILYNKYITLFIEKLPKHRDYKSAVIPEKKDTVKKLKEIAFPKAEELKAELLKRYTKEYTEYNEEKKKEAEELARNMAIQQELEKEKQRVAQQKQQQLEQEQFHAFEEMIRNQELEKERLKIVQEFGKVDPGLGGPLVPDLEKPSLDVFPTLTVSSIQPSDCHTTVRPAKPPVVDRSLKPGALSNSESIPTIDGLRHVVVPGRLCPQFLQLASANTARGVETCGILCGKLMRNEFTITHVLIPKQSAGSDYCNTENEEELFLIQDQQGLITLGWIHTHPTQTAFLSSVDLHTHCSYQMMLPESVAIVCSPKFQETGFFKLTDHGLEEISSCRQKGFHPHSKDPPLFCSCSHVTVVDRAVTITDLR</sequence>
<evidence type="ECO:0000250" key="1">
    <source>
        <dbReference type="UniProtKB" id="O35864"/>
    </source>
</evidence>
<evidence type="ECO:0000250" key="2">
    <source>
        <dbReference type="UniProtKB" id="Q96FJ0"/>
    </source>
</evidence>
<evidence type="ECO:0000255" key="3">
    <source>
        <dbReference type="PROSITE-ProRule" id="PRU01182"/>
    </source>
</evidence>
<evidence type="ECO:0000269" key="4">
    <source>
    </source>
</evidence>
<evidence type="ECO:0000269" key="5">
    <source>
    </source>
</evidence>
<evidence type="ECO:0000269" key="6">
    <source>
    </source>
</evidence>
<evidence type="ECO:0000269" key="7">
    <source>
    </source>
</evidence>
<evidence type="ECO:0000269" key="8">
    <source>
    </source>
</evidence>
<evidence type="ECO:0000269" key="9">
    <source>
    </source>
</evidence>
<evidence type="ECO:0000269" key="10">
    <source>
    </source>
</evidence>
<evidence type="ECO:0000269" key="11">
    <source>
    </source>
</evidence>
<evidence type="ECO:0000303" key="12">
    <source>
    </source>
</evidence>
<evidence type="ECO:0000303" key="13">
    <source>
    </source>
</evidence>
<evidence type="ECO:0000303" key="14">
    <source>
    </source>
</evidence>
<evidence type="ECO:0000305" key="15"/>
<evidence type="ECO:0000305" key="16">
    <source>
    </source>
</evidence>
<evidence type="ECO:0007744" key="17">
    <source>
    </source>
</evidence>
<evidence type="ECO:0007829" key="18">
    <source>
        <dbReference type="PDB" id="2XZE"/>
    </source>
</evidence>
<evidence type="ECO:0007829" key="19">
    <source>
        <dbReference type="PDB" id="3RZU"/>
    </source>
</evidence>
<evidence type="ECO:0007829" key="20">
    <source>
        <dbReference type="PDB" id="3RZV"/>
    </source>
</evidence>
<keyword id="KW-0002">3D-structure</keyword>
<keyword id="KW-0025">Alternative splicing</keyword>
<keyword id="KW-0963">Cytoplasm</keyword>
<keyword id="KW-0225">Disease variant</keyword>
<keyword id="KW-0967">Endosome</keyword>
<keyword id="KW-0378">Hydrolase</keyword>
<keyword id="KW-0472">Membrane</keyword>
<keyword id="KW-0479">Metal-binding</keyword>
<keyword id="KW-0482">Metalloprotease</keyword>
<keyword id="KW-0539">Nucleus</keyword>
<keyword id="KW-0597">Phosphoprotein</keyword>
<keyword id="KW-0645">Protease</keyword>
<keyword id="KW-1267">Proteomics identification</keyword>
<keyword id="KW-1185">Reference proteome</keyword>
<keyword id="KW-0832">Ubl conjugation</keyword>
<keyword id="KW-0833">Ubl conjugation pathway</keyword>
<keyword id="KW-0862">Zinc</keyword>
<organism>
    <name type="scientific">Homo sapiens</name>
    <name type="common">Human</name>
    <dbReference type="NCBI Taxonomy" id="9606"/>
    <lineage>
        <taxon>Eukaryota</taxon>
        <taxon>Metazoa</taxon>
        <taxon>Chordata</taxon>
        <taxon>Craniata</taxon>
        <taxon>Vertebrata</taxon>
        <taxon>Euteleostomi</taxon>
        <taxon>Mammalia</taxon>
        <taxon>Eutheria</taxon>
        <taxon>Euarchontoglires</taxon>
        <taxon>Primates</taxon>
        <taxon>Haplorrhini</taxon>
        <taxon>Catarrhini</taxon>
        <taxon>Hominidae</taxon>
        <taxon>Homo</taxon>
    </lineage>
</organism>
<proteinExistence type="evidence at protein level"/>
<name>STABP_HUMAN</name>
<comment type="function">
    <text evidence="4 5 7 9 10 11">Zinc metalloprotease that specifically cleaves 'Lys-63'-linked polyubiquitin chains (PubMed:15314065, PubMed:23542699, PubMed:34425109). Does not cleave 'Lys-48'-linked polyubiquitin chains (PubMed:15314065). Plays a role in signal transduction for cell growth and MYC induction mediated by IL-2 and GM-CSF (PubMed:10383417). Potentiates BMP (bone morphogenetic protein) signaling by antagonizing the inhibitory action of SMAD6 and SMAD7 (PubMed:11483516). Has a key role in regulation of cell surface receptor-mediated endocytosis and ubiquitin-dependent sorting of receptors to lysosomes (PubMed:15314065, PubMed:17261583). Endosomal localization of STAMBP is required for efficient EGFR degradation but not for its internalization (PubMed:15314065, PubMed:17261583). Involved in the negative regulation of PI3K-AKT-mTOR and RAS-MAP signaling pathways (PubMed:23542699).</text>
</comment>
<comment type="cofactor">
    <cofactor evidence="1">
        <name>Zn(2+)</name>
        <dbReference type="ChEBI" id="CHEBI:29105"/>
    </cofactor>
    <text evidence="1">Binds 2 Zn(2+) ions per subunit.</text>
</comment>
<comment type="activity regulation">
    <text evidence="7 11">Inhibited by N-ethylmaleimide (PubMed:15314065). Strongly and specifically inhibited by ubiquitin variants UbV(SP.2) and UbV(SP.3) (PubMed:34425109). Also inhibited by UbV(SP.1); an ubiquitin variant that also inhibits STAMBPL1 (PubMed:34425109).</text>
</comment>
<comment type="subunit">
    <text evidence="4 5 6 7 8 9">Interacts with STAM (PubMed:10383417, PubMed:15314065). Interacts with SMAD6 and SMAD7 (PubMed:11483516). Interacts with CHMP3; the interaction appears to relieve the autoinhibition of CHMP3 (PubMed:17146056, PubMed:17261583). Interacts with SMURF2 and RNF11; this interaction promotes ubiquitination (PubMed:14755250).</text>
</comment>
<comment type="interaction">
    <interactant intactId="EBI-396676">
        <id>O95630</id>
    </interactant>
    <interactant intactId="EBI-13050366">
        <id>P31941</id>
        <label>APOBEC3A</label>
    </interactant>
    <organismsDiffer>false</organismsDiffer>
    <experiments>3</experiments>
</comment>
<comment type="interaction">
    <interactant intactId="EBI-396676">
        <id>O95630</id>
    </interactant>
    <interactant intactId="EBI-930964">
        <id>P54253</id>
        <label>ATXN1</label>
    </interactant>
    <organismsDiffer>false</organismsDiffer>
    <experiments>6</experiments>
</comment>
<comment type="interaction">
    <interactant intactId="EBI-396676">
        <id>O95630</id>
    </interactant>
    <interactant intactId="EBI-1383367">
        <id>Q9NSY1</id>
        <label>BMP2K</label>
    </interactant>
    <organismsDiffer>false</organismsDiffer>
    <experiments>3</experiments>
</comment>
<comment type="interaction">
    <interactant intactId="EBI-396676">
        <id>O95630</id>
    </interactant>
    <interactant intactId="EBI-355710">
        <id>P48643</id>
        <label>CCT5</label>
    </interactant>
    <organismsDiffer>false</organismsDiffer>
    <experiments>3</experiments>
</comment>
<comment type="interaction">
    <interactant intactId="EBI-396676">
        <id>O95630</id>
    </interactant>
    <interactant intactId="EBI-3919850">
        <id>Q8IVW4</id>
        <label>CDKL3</label>
    </interactant>
    <organismsDiffer>false</organismsDiffer>
    <experiments>2</experiments>
</comment>
<comment type="interaction">
    <interactant intactId="EBI-396676">
        <id>O95630</id>
    </interactant>
    <interactant intactId="EBI-1057156">
        <id>Q9HD42</id>
        <label>CHMP1A</label>
    </interactant>
    <organismsDiffer>false</organismsDiffer>
    <experiments>8</experiments>
</comment>
<comment type="interaction">
    <interactant intactId="EBI-396676">
        <id>O95630</id>
    </interactant>
    <interactant intactId="EBI-2118090">
        <id>Q7LBR1</id>
        <label>CHMP1B</label>
    </interactant>
    <organismsDiffer>false</organismsDiffer>
    <experiments>21</experiments>
</comment>
<comment type="interaction">
    <interactant intactId="EBI-396676">
        <id>O95630</id>
    </interactant>
    <interactant intactId="EBI-2692789">
        <id>O43633</id>
        <label>CHMP2A</label>
    </interactant>
    <organismsDiffer>false</organismsDiffer>
    <experiments>3</experiments>
</comment>
<comment type="interaction">
    <interactant intactId="EBI-396676">
        <id>O95630</id>
    </interactant>
    <interactant intactId="EBI-2118119">
        <id>Q9Y3E7</id>
        <label>CHMP3</label>
    </interactant>
    <organismsDiffer>false</organismsDiffer>
    <experiments>27</experiments>
</comment>
<comment type="interaction">
    <interactant intactId="EBI-396676">
        <id>O95630</id>
    </interactant>
    <interactant intactId="EBI-15613847">
        <id>Q9Y3E7-1</id>
        <label>CHMP3</label>
    </interactant>
    <organismsDiffer>false</organismsDiffer>
    <experiments>6</experiments>
</comment>
<comment type="interaction">
    <interactant intactId="EBI-396676">
        <id>O95630</id>
    </interactant>
    <interactant intactId="EBI-749627">
        <id>Q9H444</id>
        <label>CHMP4B</label>
    </interactant>
    <organismsDiffer>false</organismsDiffer>
    <experiments>3</experiments>
</comment>
<comment type="interaction">
    <interactant intactId="EBI-396676">
        <id>O95630</id>
    </interactant>
    <interactant intactId="EBI-751303">
        <id>Q9NZZ3</id>
        <label>CHMP5</label>
    </interactant>
    <organismsDiffer>false</organismsDiffer>
    <experiments>2</experiments>
</comment>
<comment type="interaction">
    <interactant intactId="EBI-396676">
        <id>O95630</id>
    </interactant>
    <interactant intactId="EBI-740418">
        <id>O75791</id>
        <label>GRAP2</label>
    </interactant>
    <organismsDiffer>false</organismsDiffer>
    <experiments>6</experiments>
</comment>
<comment type="interaction">
    <interactant intactId="EBI-396676">
        <id>O95630</id>
    </interactant>
    <interactant intactId="EBI-401755">
        <id>P62993</id>
        <label>GRB2</label>
    </interactant>
    <organismsDiffer>false</organismsDiffer>
    <experiments>10</experiments>
</comment>
<comment type="interaction">
    <interactant intactId="EBI-396676">
        <id>O95630</id>
    </interactant>
    <interactant intactId="EBI-1055254">
        <id>Q8WXH2</id>
        <label>JPH3</label>
    </interactant>
    <organismsDiffer>false</organismsDiffer>
    <experiments>3</experiments>
</comment>
<comment type="interaction">
    <interactant intactId="EBI-396676">
        <id>O95630</id>
    </interactant>
    <interactant intactId="EBI-21251460">
        <id>O60260-5</id>
        <label>PRKN</label>
    </interactant>
    <organismsDiffer>false</organismsDiffer>
    <experiments>3</experiments>
</comment>
<comment type="interaction">
    <interactant intactId="EBI-396676">
        <id>O95630</id>
    </interactant>
    <interactant intactId="EBI-396669">
        <id>Q9Y3C5</id>
        <label>RNF11</label>
    </interactant>
    <organismsDiffer>false</organismsDiffer>
    <experiments>5</experiments>
</comment>
<comment type="interaction">
    <interactant intactId="EBI-396676">
        <id>O95630</id>
    </interactant>
    <interactant intactId="EBI-4324970">
        <id>O43541-2</id>
        <label>SMAD6</label>
    </interactant>
    <organismsDiffer>false</organismsDiffer>
    <experiments>2</experiments>
</comment>
<comment type="interaction">
    <interactant intactId="EBI-396676">
        <id>O95630</id>
    </interactant>
    <interactant intactId="EBI-752333">
        <id>Q92783</id>
        <label>STAM</label>
    </interactant>
    <organismsDiffer>false</organismsDiffer>
    <experiments>7</experiments>
</comment>
<comment type="interaction">
    <interactant intactId="EBI-396676">
        <id>O95630</id>
    </interactant>
    <interactant intactId="EBI-373258">
        <id>O75886</id>
        <label>STAM2</label>
    </interactant>
    <organismsDiffer>false</organismsDiffer>
    <experiments>9</experiments>
</comment>
<comment type="interaction">
    <interactant intactId="EBI-396676">
        <id>O95630</id>
    </interactant>
    <interactant intactId="EBI-372899">
        <id>Q13148</id>
        <label>TARDBP</label>
    </interactant>
    <organismsDiffer>false</organismsDiffer>
    <experiments>3</experiments>
</comment>
<comment type="interaction">
    <interactant intactId="EBI-396676">
        <id>O95630</id>
    </interactant>
    <interactant intactId="EBI-358993">
        <id>Q15645</id>
        <label>TRIP13</label>
    </interactant>
    <organismsDiffer>false</organismsDiffer>
    <experiments>4</experiments>
</comment>
<comment type="interaction">
    <interactant intactId="EBI-396676">
        <id>O95630</id>
    </interactant>
    <interactant intactId="EBI-413034">
        <id>P0CG47</id>
        <label>UBB</label>
    </interactant>
    <organismsDiffer>false</organismsDiffer>
    <experiments>4</experiments>
</comment>
<comment type="subcellular location">
    <subcellularLocation>
        <location evidence="9 16">Nucleus</location>
    </subcellularLocation>
    <subcellularLocation>
        <location evidence="9">Membrane</location>
        <topology evidence="9">Peripheral membrane protein</topology>
    </subcellularLocation>
    <subcellularLocation>
        <location evidence="9">Cytoplasm</location>
    </subcellularLocation>
    <subcellularLocation>
        <location evidence="7 9">Early endosome</location>
    </subcellularLocation>
</comment>
<comment type="alternative products">
    <event type="alternative splicing"/>
    <isoform>
        <id>O95630-1</id>
        <name>1</name>
        <sequence type="displayed"/>
    </isoform>
    <isoform>
        <id>O95630-2</id>
        <name>2</name>
        <sequence type="described" ref="VSP_057197"/>
    </isoform>
</comment>
<comment type="tissue specificity">
    <text evidence="4">Ubiquitously expressed.</text>
</comment>
<comment type="domain">
    <text evidence="1">The JAMM motif is essential for the protease activity.</text>
</comment>
<comment type="PTM">
    <text evidence="5">Phosphorylated after BMP type I receptor activation.</text>
</comment>
<comment type="PTM">
    <text evidence="6">Ubiquitinated by SMURF2 in the presence of RNF11.</text>
</comment>
<comment type="disease" evidence="10">
    <disease id="DI-03797">
        <name>Microcephaly-capillary malformation syndrome</name>
        <acronym>MICCAP</acronym>
        <description>A congenital disorder characterized by severe progressive microcephaly, early-onset refractory epilepsy, profound developmental delay, and multiple small capillary malformations spread diffusely on the body. Additional more variable features include dysmorphic facial features, distal limb abnormalities, and mild heart defects.</description>
        <dbReference type="MIM" id="614261"/>
    </disease>
    <text>The disease is caused by variants affecting the gene represented in this entry.</text>
</comment>
<comment type="miscellaneous">
    <text evidence="2">X-ray crystallography studies of STAMBPL1, another member of the peptidase M67C family, has shown that Glu-280 binds zinc indirectly via a water molecule. Nevertheless, this residue is essential for catalytic activity.</text>
</comment>
<comment type="similarity">
    <text evidence="15">Belongs to the peptidase M67C family.</text>
</comment>
<reference key="1">
    <citation type="journal article" date="1999" name="J. Biol. Chem.">
        <title>Possible involvement of a novel STAM-associated molecule 'AMSH' in intracellular signal transduction mediated by cytokines.</title>
        <authorList>
            <person name="Tanaka N."/>
            <person name="Kaneko K."/>
            <person name="Asao H."/>
            <person name="Kasai H."/>
            <person name="Endo Y."/>
            <person name="Fujita T."/>
            <person name="Takeshita T."/>
            <person name="Sugamura K."/>
        </authorList>
    </citation>
    <scope>NUCLEOTIDE SEQUENCE [MRNA] (ISOFORM 1)</scope>
    <scope>FUNCTION</scope>
    <scope>TISSUE SPECIFICITY</scope>
    <scope>INTERACTION WITH STAM</scope>
    <source>
        <tissue>Peripheral blood lymphocyte</tissue>
    </source>
</reference>
<reference key="2">
    <citation type="journal article" date="2005" name="Nature">
        <title>Generation and annotation of the DNA sequences of human chromosomes 2 and 4.</title>
        <authorList>
            <person name="Hillier L.W."/>
            <person name="Graves T.A."/>
            <person name="Fulton R.S."/>
            <person name="Fulton L.A."/>
            <person name="Pepin K.H."/>
            <person name="Minx P."/>
            <person name="Wagner-McPherson C."/>
            <person name="Layman D."/>
            <person name="Wylie K."/>
            <person name="Sekhon M."/>
            <person name="Becker M.C."/>
            <person name="Fewell G.A."/>
            <person name="Delehaunty K.D."/>
            <person name="Miner T.L."/>
            <person name="Nash W.E."/>
            <person name="Kremitzki C."/>
            <person name="Oddy L."/>
            <person name="Du H."/>
            <person name="Sun H."/>
            <person name="Bradshaw-Cordum H."/>
            <person name="Ali J."/>
            <person name="Carter J."/>
            <person name="Cordes M."/>
            <person name="Harris A."/>
            <person name="Isak A."/>
            <person name="van Brunt A."/>
            <person name="Nguyen C."/>
            <person name="Du F."/>
            <person name="Courtney L."/>
            <person name="Kalicki J."/>
            <person name="Ozersky P."/>
            <person name="Abbott S."/>
            <person name="Armstrong J."/>
            <person name="Belter E.A."/>
            <person name="Caruso L."/>
            <person name="Cedroni M."/>
            <person name="Cotton M."/>
            <person name="Davidson T."/>
            <person name="Desai A."/>
            <person name="Elliott G."/>
            <person name="Erb T."/>
            <person name="Fronick C."/>
            <person name="Gaige T."/>
            <person name="Haakenson W."/>
            <person name="Haglund K."/>
            <person name="Holmes A."/>
            <person name="Harkins R."/>
            <person name="Kim K."/>
            <person name="Kruchowski S.S."/>
            <person name="Strong C.M."/>
            <person name="Grewal N."/>
            <person name="Goyea E."/>
            <person name="Hou S."/>
            <person name="Levy A."/>
            <person name="Martinka S."/>
            <person name="Mead K."/>
            <person name="McLellan M.D."/>
            <person name="Meyer R."/>
            <person name="Randall-Maher J."/>
            <person name="Tomlinson C."/>
            <person name="Dauphin-Kohlberg S."/>
            <person name="Kozlowicz-Reilly A."/>
            <person name="Shah N."/>
            <person name="Swearengen-Shahid S."/>
            <person name="Snider J."/>
            <person name="Strong J.T."/>
            <person name="Thompson J."/>
            <person name="Yoakum M."/>
            <person name="Leonard S."/>
            <person name="Pearman C."/>
            <person name="Trani L."/>
            <person name="Radionenko M."/>
            <person name="Waligorski J.E."/>
            <person name="Wang C."/>
            <person name="Rock S.M."/>
            <person name="Tin-Wollam A.-M."/>
            <person name="Maupin R."/>
            <person name="Latreille P."/>
            <person name="Wendl M.C."/>
            <person name="Yang S.-P."/>
            <person name="Pohl C."/>
            <person name="Wallis J.W."/>
            <person name="Spieth J."/>
            <person name="Bieri T.A."/>
            <person name="Berkowicz N."/>
            <person name="Nelson J.O."/>
            <person name="Osborne J."/>
            <person name="Ding L."/>
            <person name="Meyer R."/>
            <person name="Sabo A."/>
            <person name="Shotland Y."/>
            <person name="Sinha P."/>
            <person name="Wohldmann P.E."/>
            <person name="Cook L.L."/>
            <person name="Hickenbotham M.T."/>
            <person name="Eldred J."/>
            <person name="Williams D."/>
            <person name="Jones T.A."/>
            <person name="She X."/>
            <person name="Ciccarelli F.D."/>
            <person name="Izaurralde E."/>
            <person name="Taylor J."/>
            <person name="Schmutz J."/>
            <person name="Myers R.M."/>
            <person name="Cox D.R."/>
            <person name="Huang X."/>
            <person name="McPherson J.D."/>
            <person name="Mardis E.R."/>
            <person name="Clifton S.W."/>
            <person name="Warren W.C."/>
            <person name="Chinwalla A.T."/>
            <person name="Eddy S.R."/>
            <person name="Marra M.A."/>
            <person name="Ovcharenko I."/>
            <person name="Furey T.S."/>
            <person name="Miller W."/>
            <person name="Eichler E.E."/>
            <person name="Bork P."/>
            <person name="Suyama M."/>
            <person name="Torrents D."/>
            <person name="Waterston R.H."/>
            <person name="Wilson R.K."/>
        </authorList>
    </citation>
    <scope>NUCLEOTIDE SEQUENCE [LARGE SCALE GENOMIC DNA]</scope>
</reference>
<reference key="3">
    <citation type="submission" date="2005-09" db="EMBL/GenBank/DDBJ databases">
        <authorList>
            <person name="Mural R.J."/>
            <person name="Istrail S."/>
            <person name="Sutton G.G."/>
            <person name="Florea L."/>
            <person name="Halpern A.L."/>
            <person name="Mobarry C.M."/>
            <person name="Lippert R."/>
            <person name="Walenz B."/>
            <person name="Shatkay H."/>
            <person name="Dew I."/>
            <person name="Miller J.R."/>
            <person name="Flanigan M.J."/>
            <person name="Edwards N.J."/>
            <person name="Bolanos R."/>
            <person name="Fasulo D."/>
            <person name="Halldorsson B.V."/>
            <person name="Hannenhalli S."/>
            <person name="Turner R."/>
            <person name="Yooseph S."/>
            <person name="Lu F."/>
            <person name="Nusskern D.R."/>
            <person name="Shue B.C."/>
            <person name="Zheng X.H."/>
            <person name="Zhong F."/>
            <person name="Delcher A.L."/>
            <person name="Huson D.H."/>
            <person name="Kravitz S.A."/>
            <person name="Mouchard L."/>
            <person name="Reinert K."/>
            <person name="Remington K.A."/>
            <person name="Clark A.G."/>
            <person name="Waterman M.S."/>
            <person name="Eichler E.E."/>
            <person name="Adams M.D."/>
            <person name="Hunkapiller M.W."/>
            <person name="Myers E.W."/>
            <person name="Venter J.C."/>
        </authorList>
    </citation>
    <scope>NUCLEOTIDE SEQUENCE [LARGE SCALE GENOMIC DNA]</scope>
</reference>
<reference key="4">
    <citation type="journal article" date="2004" name="Genome Res.">
        <title>The status, quality, and expansion of the NIH full-length cDNA project: the Mammalian Gene Collection (MGC).</title>
        <authorList>
            <consortium name="The MGC Project Team"/>
        </authorList>
    </citation>
    <scope>NUCLEOTIDE SEQUENCE [LARGE SCALE MRNA] (ISOFORM 1)</scope>
    <source>
        <tissue>Brain</tissue>
        <tissue>Eye</tissue>
        <tissue>Lymph</tissue>
    </source>
</reference>
<reference key="5">
    <citation type="journal article" date="2009" name="BMC Genomics">
        <title>Discovery of novel human transcript variants by analysis of intronic single-block EST with polyadenylation site.</title>
        <authorList>
            <person name="Wang P."/>
            <person name="Yu P."/>
            <person name="Gao P."/>
            <person name="Shi T."/>
            <person name="Ma D."/>
        </authorList>
    </citation>
    <scope>NUCLEOTIDE SEQUENCE [MRNA] OF 3-346 (ISOFORM 2)</scope>
</reference>
<reference key="6">
    <citation type="journal article" date="2001" name="EMBO J.">
        <title>Promoting bone morphogenetic protein signaling through negative regulation of inhibitory Smads.</title>
        <authorList>
            <person name="Itoh F."/>
            <person name="Asao H."/>
            <person name="Sugamura K."/>
            <person name="Heldin C.-H."/>
            <person name="ten Dijke P."/>
            <person name="Itoh S."/>
        </authorList>
    </citation>
    <scope>FUNCTION</scope>
    <scope>INTERACTION WITH SMAD6 AND SMAD7</scope>
    <scope>SUBCELLULAR LOCATION</scope>
    <scope>PHOSPHORYLATION AT SER-2; SER-48; SER-243; SER-245 AND SER-247</scope>
</reference>
<reference key="7">
    <citation type="journal article" date="2002" name="BMC Biochem.">
        <title>MPN+, a putative catalytic motif found in a subset of MPN domain proteins from eukaryotes and prokaryotes, is critical for Rpn11 function.</title>
        <authorList>
            <person name="Maytal-Kivity V."/>
            <person name="Reis N."/>
            <person name="Hofmann K."/>
            <person name="Glickman M.H."/>
        </authorList>
    </citation>
    <scope>INVOLVEMENT OF GLU-280; HIS-335 AND HIS-337 IN ZINC-BINDING</scope>
</reference>
<reference key="8">
    <citation type="journal article" date="2004" name="J. Cell Biol.">
        <title>AMSH is an endosome-associated ubiquitin isopeptidase.</title>
        <authorList>
            <person name="McCullough J."/>
            <person name="Clague M.J."/>
            <person name="Urbe S."/>
        </authorList>
    </citation>
    <scope>MUTAGENESIS OF ASP-348</scope>
    <scope>FUNCTION</scope>
    <scope>ACTIVITY REGULATION</scope>
    <scope>SUBCELLULAR LOCATION</scope>
    <scope>INTERACTION WITH STAM</scope>
</reference>
<reference key="9">
    <citation type="journal article" date="2004" name="Oncogene">
        <title>An RNF11: Smurf2 complex mediates ubiquitination of the AMSH protein.</title>
        <authorList>
            <person name="Li H."/>
            <person name="Seth A.K."/>
        </authorList>
    </citation>
    <scope>INTERACTION WITH SMURF2 AND RNF11</scope>
    <scope>UBIQUITINATION</scope>
</reference>
<reference key="10">
    <citation type="journal article" date="2006" name="Proc. Natl. Acad. Sci. U.S.A.">
        <title>Release of autoinhibition converts ESCRT-III components into potent inhibitors of HIV-1 budding.</title>
        <authorList>
            <person name="Zamborlini A."/>
            <person name="Usami Y."/>
            <person name="Radoshitzky S.R."/>
            <person name="Popova E."/>
            <person name="Palu G."/>
            <person name="Goettlinger H."/>
        </authorList>
    </citation>
    <scope>INTERACTION WITH CHMP3</scope>
</reference>
<reference key="11">
    <citation type="journal article" date="2007" name="J. Biol. Chem.">
        <title>Targeting of AMSH to endosomes is required for epidermal growth factor receptor degradation.</title>
        <authorList>
            <person name="Ma Y.M."/>
            <person name="Boucrot E."/>
            <person name="Villen J."/>
            <person name="Affar el B."/>
            <person name="Gygi S.P."/>
            <person name="Goettlinger H.G."/>
            <person name="Kirchhausen T."/>
        </authorList>
    </citation>
    <scope>FUNCTION</scope>
    <scope>INTERACTION WITH CHMP3</scope>
    <scope>SUBCELLULAR LOCATION</scope>
</reference>
<reference key="12">
    <citation type="journal article" date="2011" name="BMC Syst. Biol.">
        <title>Initial characterization of the human central proteome.</title>
        <authorList>
            <person name="Burkard T.R."/>
            <person name="Planyavsky M."/>
            <person name="Kaupe I."/>
            <person name="Breitwieser F.P."/>
            <person name="Buerckstuemmer T."/>
            <person name="Bennett K.L."/>
            <person name="Superti-Furga G."/>
            <person name="Colinge J."/>
        </authorList>
    </citation>
    <scope>IDENTIFICATION BY MASS SPECTROMETRY [LARGE SCALE ANALYSIS]</scope>
</reference>
<reference key="13">
    <citation type="journal article" date="2013" name="J. Proteome Res.">
        <title>Toward a comprehensive characterization of a human cancer cell phosphoproteome.</title>
        <authorList>
            <person name="Zhou H."/>
            <person name="Di Palma S."/>
            <person name="Preisinger C."/>
            <person name="Peng M."/>
            <person name="Polat A.N."/>
            <person name="Heck A.J."/>
            <person name="Mohammed S."/>
        </authorList>
    </citation>
    <scope>PHOSPHORYLATION [LARGE SCALE ANALYSIS] AT SER-2; SER-243 AND SER-247</scope>
    <scope>IDENTIFICATION BY MASS SPECTROMETRY [LARGE SCALE ANALYSIS]</scope>
    <source>
        <tissue>Cervix carcinoma</tissue>
        <tissue>Erythroleukemia</tissue>
    </source>
</reference>
<reference key="14">
    <citation type="journal article" date="2013" name="Nat. Genet.">
        <title>Mutations in STAMBP, encoding a deubiquitinating enzyme, cause microcephaly-capillary malformation syndrome.</title>
        <authorList>
            <consortium name="FORGE Canada Consortium"/>
            <person name="McDonell L.M."/>
            <person name="Mirzaa G.M."/>
            <person name="Alcantara D."/>
            <person name="Schwartzentruber J."/>
            <person name="Carter M.T."/>
            <person name="Lee L.J."/>
            <person name="Clericuzio C.L."/>
            <person name="Graham J.M. Jr."/>
            <person name="Morris-Rosendahl D.J."/>
            <person name="Polster T."/>
            <person name="Acsadi G."/>
            <person name="Townshend S."/>
            <person name="Williams S."/>
            <person name="Halbert A."/>
            <person name="Isidor B."/>
            <person name="David A."/>
            <person name="Smyser C.D."/>
            <person name="Paciorkowski A.R."/>
            <person name="Willing M."/>
            <person name="Woulfe J."/>
            <person name="Das S."/>
            <person name="Beaulieu C.L."/>
            <person name="Marcadier J."/>
            <person name="Geraghty M.T."/>
            <person name="Frey B.J."/>
            <person name="Majewski J."/>
            <person name="Bulman D.E."/>
            <person name="Dobyns W.B."/>
            <person name="O'Driscoll M."/>
            <person name="Boycott K.M."/>
        </authorList>
    </citation>
    <scope>FUNCTION</scope>
    <scope>VARIANTS MICCAP PRO-14; CYS-38; GLY-42; CYS-63; TYR-100 AND ILE-313</scope>
</reference>
<reference key="15">
    <citation type="journal article" date="2014" name="J. Proteomics">
        <title>An enzyme assisted RP-RPLC approach for in-depth analysis of human liver phosphoproteome.</title>
        <authorList>
            <person name="Bian Y."/>
            <person name="Song C."/>
            <person name="Cheng K."/>
            <person name="Dong M."/>
            <person name="Wang F."/>
            <person name="Huang J."/>
            <person name="Sun D."/>
            <person name="Wang L."/>
            <person name="Ye M."/>
            <person name="Zou H."/>
        </authorList>
    </citation>
    <scope>IDENTIFICATION BY MASS SPECTROMETRY [LARGE SCALE ANALYSIS]</scope>
    <source>
        <tissue>Liver</tissue>
    </source>
</reference>
<reference key="16">
    <citation type="journal article" date="2021" name="J. Biol. Chem.">
        <title>Structural and functional characterization of ubiquitin variant inhibitors for the JAMM-family deubiquitinases STAMBP and STAMBPL1.</title>
        <authorList>
            <person name="Guo Y."/>
            <person name="Liu Q."/>
            <person name="Mallette E."/>
            <person name="Caba C."/>
            <person name="Hou F."/>
            <person name="Fux J."/>
            <person name="LaPlante G."/>
            <person name="Dong A."/>
            <person name="Zhang Q."/>
            <person name="Zheng H."/>
            <person name="Tong Y."/>
            <person name="Zhang W."/>
        </authorList>
    </citation>
    <scope>FUNCTION</scope>
    <scope>ACTIVITY REGULATION</scope>
</reference>
<accession>O95630</accession>
<accession>B5M0B6</accession>
<accession>D6W5H7</accession>
<accession>Q3MJE7</accession>
<protein>
    <recommendedName>
        <fullName>STAM-binding protein</fullName>
        <ecNumber evidence="7 10 11">3.4.19.-</ecNumber>
    </recommendedName>
    <alternativeName>
        <fullName evidence="12">Associated molecule with the SH3 domain of STAM</fullName>
    </alternativeName>
    <alternativeName>
        <fullName evidence="13">Endosome-associated ubiquitin isopeptidase</fullName>
    </alternativeName>
</protein>